<gene>
    <name type="primary">ycbN</name>
    <name type="ordered locus">BSU02570</name>
</gene>
<organism>
    <name type="scientific">Bacillus subtilis (strain 168)</name>
    <dbReference type="NCBI Taxonomy" id="224308"/>
    <lineage>
        <taxon>Bacteria</taxon>
        <taxon>Bacillati</taxon>
        <taxon>Bacillota</taxon>
        <taxon>Bacilli</taxon>
        <taxon>Bacillales</taxon>
        <taxon>Bacillaceae</taxon>
        <taxon>Bacillus</taxon>
    </lineage>
</organism>
<evidence type="ECO:0000255" key="1">
    <source>
        <dbReference type="PROSITE-ProRule" id="PRU00434"/>
    </source>
</evidence>
<evidence type="ECO:0000305" key="2"/>
<dbReference type="EMBL" id="AL009126">
    <property type="protein sequence ID" value="CAB12051.2"/>
    <property type="molecule type" value="Genomic_DNA"/>
</dbReference>
<dbReference type="EMBL" id="D30808">
    <property type="protein sequence ID" value="BAA06478.1"/>
    <property type="molecule type" value="Genomic_DNA"/>
</dbReference>
<dbReference type="PIR" id="H69753">
    <property type="entry name" value="H69753"/>
</dbReference>
<dbReference type="RefSeq" id="NP_388139.2">
    <property type="nucleotide sequence ID" value="NC_000964.3"/>
</dbReference>
<dbReference type="RefSeq" id="WP_003246292.1">
    <property type="nucleotide sequence ID" value="NZ_OZ025638.1"/>
</dbReference>
<dbReference type="SMR" id="P42246"/>
<dbReference type="FunCoup" id="P42246">
    <property type="interactions" value="224"/>
</dbReference>
<dbReference type="STRING" id="224308.BSU02570"/>
<dbReference type="PaxDb" id="224308-BSU02570"/>
<dbReference type="EnsemblBacteria" id="CAB12051">
    <property type="protein sequence ID" value="CAB12051"/>
    <property type="gene ID" value="BSU_02570"/>
</dbReference>
<dbReference type="GeneID" id="938404"/>
<dbReference type="KEGG" id="bsu:BSU02570"/>
<dbReference type="PATRIC" id="fig|224308.179.peg.265"/>
<dbReference type="eggNOG" id="COG1131">
    <property type="taxonomic scope" value="Bacteria"/>
</dbReference>
<dbReference type="InParanoid" id="P42246"/>
<dbReference type="OrthoDB" id="9804819at2"/>
<dbReference type="PhylomeDB" id="P42246"/>
<dbReference type="BioCyc" id="BSUB:BSU02570-MONOMER"/>
<dbReference type="Proteomes" id="UP000001570">
    <property type="component" value="Chromosome"/>
</dbReference>
<dbReference type="GO" id="GO:0005524">
    <property type="term" value="F:ATP binding"/>
    <property type="evidence" value="ECO:0007669"/>
    <property type="project" value="UniProtKB-KW"/>
</dbReference>
<dbReference type="GO" id="GO:0016887">
    <property type="term" value="F:ATP hydrolysis activity"/>
    <property type="evidence" value="ECO:0007669"/>
    <property type="project" value="InterPro"/>
</dbReference>
<dbReference type="CDD" id="cd03268">
    <property type="entry name" value="ABC_BcrA_bacitracin_resist"/>
    <property type="match status" value="1"/>
</dbReference>
<dbReference type="Gene3D" id="3.40.50.300">
    <property type="entry name" value="P-loop containing nucleotide triphosphate hydrolases"/>
    <property type="match status" value="1"/>
</dbReference>
<dbReference type="InterPro" id="IPR003593">
    <property type="entry name" value="AAA+_ATPase"/>
</dbReference>
<dbReference type="InterPro" id="IPR003439">
    <property type="entry name" value="ABC_transporter-like_ATP-bd"/>
</dbReference>
<dbReference type="InterPro" id="IPR017871">
    <property type="entry name" value="ABC_transporter-like_CS"/>
</dbReference>
<dbReference type="InterPro" id="IPR027417">
    <property type="entry name" value="P-loop_NTPase"/>
</dbReference>
<dbReference type="PANTHER" id="PTHR43335">
    <property type="entry name" value="ABC TRANSPORTER, ATP-BINDING PROTEIN"/>
    <property type="match status" value="1"/>
</dbReference>
<dbReference type="PANTHER" id="PTHR43335:SF8">
    <property type="entry name" value="ABC TRANSPORTER, ATP-BINDING PROTEIN"/>
    <property type="match status" value="1"/>
</dbReference>
<dbReference type="Pfam" id="PF00005">
    <property type="entry name" value="ABC_tran"/>
    <property type="match status" value="1"/>
</dbReference>
<dbReference type="SMART" id="SM00382">
    <property type="entry name" value="AAA"/>
    <property type="match status" value="1"/>
</dbReference>
<dbReference type="SUPFAM" id="SSF52540">
    <property type="entry name" value="P-loop containing nucleoside triphosphate hydrolases"/>
    <property type="match status" value="1"/>
</dbReference>
<dbReference type="PROSITE" id="PS00211">
    <property type="entry name" value="ABC_TRANSPORTER_1"/>
    <property type="match status" value="1"/>
</dbReference>
<dbReference type="PROSITE" id="PS50893">
    <property type="entry name" value="ABC_TRANSPORTER_2"/>
    <property type="match status" value="1"/>
</dbReference>
<protein>
    <recommendedName>
        <fullName>Uncharacterized ABC transporter ATP-binding protein YcbN</fullName>
    </recommendedName>
</protein>
<name>YCBN_BACSU</name>
<reference key="1">
    <citation type="journal article" date="1997" name="Nature">
        <title>The complete genome sequence of the Gram-positive bacterium Bacillus subtilis.</title>
        <authorList>
            <person name="Kunst F."/>
            <person name="Ogasawara N."/>
            <person name="Moszer I."/>
            <person name="Albertini A.M."/>
            <person name="Alloni G."/>
            <person name="Azevedo V."/>
            <person name="Bertero M.G."/>
            <person name="Bessieres P."/>
            <person name="Bolotin A."/>
            <person name="Borchert S."/>
            <person name="Borriss R."/>
            <person name="Boursier L."/>
            <person name="Brans A."/>
            <person name="Braun M."/>
            <person name="Brignell S.C."/>
            <person name="Bron S."/>
            <person name="Brouillet S."/>
            <person name="Bruschi C.V."/>
            <person name="Caldwell B."/>
            <person name="Capuano V."/>
            <person name="Carter N.M."/>
            <person name="Choi S.-K."/>
            <person name="Codani J.-J."/>
            <person name="Connerton I.F."/>
            <person name="Cummings N.J."/>
            <person name="Daniel R.A."/>
            <person name="Denizot F."/>
            <person name="Devine K.M."/>
            <person name="Duesterhoeft A."/>
            <person name="Ehrlich S.D."/>
            <person name="Emmerson P.T."/>
            <person name="Entian K.-D."/>
            <person name="Errington J."/>
            <person name="Fabret C."/>
            <person name="Ferrari E."/>
            <person name="Foulger D."/>
            <person name="Fritz C."/>
            <person name="Fujita M."/>
            <person name="Fujita Y."/>
            <person name="Fuma S."/>
            <person name="Galizzi A."/>
            <person name="Galleron N."/>
            <person name="Ghim S.-Y."/>
            <person name="Glaser P."/>
            <person name="Goffeau A."/>
            <person name="Golightly E.J."/>
            <person name="Grandi G."/>
            <person name="Guiseppi G."/>
            <person name="Guy B.J."/>
            <person name="Haga K."/>
            <person name="Haiech J."/>
            <person name="Harwood C.R."/>
            <person name="Henaut A."/>
            <person name="Hilbert H."/>
            <person name="Holsappel S."/>
            <person name="Hosono S."/>
            <person name="Hullo M.-F."/>
            <person name="Itaya M."/>
            <person name="Jones L.-M."/>
            <person name="Joris B."/>
            <person name="Karamata D."/>
            <person name="Kasahara Y."/>
            <person name="Klaerr-Blanchard M."/>
            <person name="Klein C."/>
            <person name="Kobayashi Y."/>
            <person name="Koetter P."/>
            <person name="Koningstein G."/>
            <person name="Krogh S."/>
            <person name="Kumano M."/>
            <person name="Kurita K."/>
            <person name="Lapidus A."/>
            <person name="Lardinois S."/>
            <person name="Lauber J."/>
            <person name="Lazarevic V."/>
            <person name="Lee S.-M."/>
            <person name="Levine A."/>
            <person name="Liu H."/>
            <person name="Masuda S."/>
            <person name="Mauel C."/>
            <person name="Medigue C."/>
            <person name="Medina N."/>
            <person name="Mellado R.P."/>
            <person name="Mizuno M."/>
            <person name="Moestl D."/>
            <person name="Nakai S."/>
            <person name="Noback M."/>
            <person name="Noone D."/>
            <person name="O'Reilly M."/>
            <person name="Ogawa K."/>
            <person name="Ogiwara A."/>
            <person name="Oudega B."/>
            <person name="Park S.-H."/>
            <person name="Parro V."/>
            <person name="Pohl T.M."/>
            <person name="Portetelle D."/>
            <person name="Porwollik S."/>
            <person name="Prescott A.M."/>
            <person name="Presecan E."/>
            <person name="Pujic P."/>
            <person name="Purnelle B."/>
            <person name="Rapoport G."/>
            <person name="Rey M."/>
            <person name="Reynolds S."/>
            <person name="Rieger M."/>
            <person name="Rivolta C."/>
            <person name="Rocha E."/>
            <person name="Roche B."/>
            <person name="Rose M."/>
            <person name="Sadaie Y."/>
            <person name="Sato T."/>
            <person name="Scanlan E."/>
            <person name="Schleich S."/>
            <person name="Schroeter R."/>
            <person name="Scoffone F."/>
            <person name="Sekiguchi J."/>
            <person name="Sekowska A."/>
            <person name="Seror S.J."/>
            <person name="Serror P."/>
            <person name="Shin B.-S."/>
            <person name="Soldo B."/>
            <person name="Sorokin A."/>
            <person name="Tacconi E."/>
            <person name="Takagi T."/>
            <person name="Takahashi H."/>
            <person name="Takemaru K."/>
            <person name="Takeuchi M."/>
            <person name="Tamakoshi A."/>
            <person name="Tanaka T."/>
            <person name="Terpstra P."/>
            <person name="Tognoni A."/>
            <person name="Tosato V."/>
            <person name="Uchiyama S."/>
            <person name="Vandenbol M."/>
            <person name="Vannier F."/>
            <person name="Vassarotti A."/>
            <person name="Viari A."/>
            <person name="Wambutt R."/>
            <person name="Wedler E."/>
            <person name="Wedler H."/>
            <person name="Weitzenegger T."/>
            <person name="Winters P."/>
            <person name="Wipat A."/>
            <person name="Yamamoto H."/>
            <person name="Yamane K."/>
            <person name="Yasumoto K."/>
            <person name="Yata K."/>
            <person name="Yoshida K."/>
            <person name="Yoshikawa H.-F."/>
            <person name="Zumstein E."/>
            <person name="Yoshikawa H."/>
            <person name="Danchin A."/>
        </authorList>
    </citation>
    <scope>NUCLEOTIDE SEQUENCE [LARGE SCALE GENOMIC DNA]</scope>
    <source>
        <strain>168</strain>
    </source>
</reference>
<reference key="2">
    <citation type="journal article" date="2009" name="Microbiology">
        <title>From a consortium sequence to a unified sequence: the Bacillus subtilis 168 reference genome a decade later.</title>
        <authorList>
            <person name="Barbe V."/>
            <person name="Cruveiller S."/>
            <person name="Kunst F."/>
            <person name="Lenoble P."/>
            <person name="Meurice G."/>
            <person name="Sekowska A."/>
            <person name="Vallenet D."/>
            <person name="Wang T."/>
            <person name="Moszer I."/>
            <person name="Medigue C."/>
            <person name="Danchin A."/>
        </authorList>
    </citation>
    <scope>SEQUENCE REVISION</scope>
</reference>
<reference key="3">
    <citation type="journal article" date="1995" name="Microbiology">
        <title>Determination of a 21548 bp nucleotide sequence around the 24 degrees region of the Bacillus subtilis chromosome.</title>
        <authorList>
            <person name="Ogawa K."/>
            <person name="Akagawa E."/>
            <person name="Nakamura K."/>
            <person name="Yamane K."/>
        </authorList>
    </citation>
    <scope>NUCLEOTIDE SEQUENCE [GENOMIC DNA] OF 119-307</scope>
    <source>
        <strain>168</strain>
    </source>
</reference>
<comment type="similarity">
    <text evidence="2">Belongs to the ABC transporter superfamily.</text>
</comment>
<accession>P42246</accession>
<sequence length="307" mass="34503">MTYIVQTNGLTKTYQGKEVVSNVSMHIKKGEIYGFLGPNGAGKTTIMKMLTSLVKPTSGEIIILGNKFTHTSYEVLGNIGSMIEYPIFYENLTAEENLDLHCEYMGYHNKKAIQEVLDMVNLKQIDKKPVKTFSLGMKQRLGIARAILTKPDLLILDEPVNGLDPLGIKKIRQLFQVLSKEYGMTLLISSHLLGEIEQIADTIGVIRDGRLLEEVSMEDVRGQNTEYIELVTPNQTRACFVLEKELQLTNFKILNEKTIRIYEAEASQAAISKALILNDVDIESMNKKYTSLEDYFIKLINGNSISA</sequence>
<keyword id="KW-0067">ATP-binding</keyword>
<keyword id="KW-0547">Nucleotide-binding</keyword>
<keyword id="KW-1185">Reference proteome</keyword>
<keyword id="KW-0813">Transport</keyword>
<proteinExistence type="inferred from homology"/>
<feature type="chain" id="PRO_0000093137" description="Uncharacterized ABC transporter ATP-binding protein YcbN">
    <location>
        <begin position="1"/>
        <end position="307"/>
    </location>
</feature>
<feature type="domain" description="ABC transporter" evidence="1">
    <location>
        <begin position="5"/>
        <end position="233"/>
    </location>
</feature>
<feature type="binding site" evidence="1">
    <location>
        <begin position="37"/>
        <end position="44"/>
    </location>
    <ligand>
        <name>ATP</name>
        <dbReference type="ChEBI" id="CHEBI:30616"/>
    </ligand>
</feature>
<feature type="sequence conflict" description="In Ref. 2; BAA06478." evidence="2" ref="2">
    <original>V</original>
    <variation>L</variation>
    <location>
        <position position="231"/>
    </location>
</feature>
<feature type="sequence conflict" description="In Ref. 2; BAA06478." evidence="2" ref="2">
    <original>IESMNKKYTSLEDYFIKLINGNSISA</original>
    <variation>TWINEHKSIRRWRIISSN</variation>
    <location>
        <begin position="282"/>
        <end position="307"/>
    </location>
</feature>